<evidence type="ECO:0000256" key="1">
    <source>
        <dbReference type="SAM" id="MobiDB-lite"/>
    </source>
</evidence>
<evidence type="ECO:0000303" key="2">
    <source>
    </source>
</evidence>
<evidence type="ECO:0000305" key="3"/>
<protein>
    <recommendedName>
        <fullName evidence="2">Small ribosomal subunit protein eS26z</fullName>
    </recommendedName>
    <alternativeName>
        <fullName>40S ribosomal protein S26-2</fullName>
    </alternativeName>
</protein>
<sequence length="133" mass="14841">MTFKRRNGGRNKHNRGHVNPIRCSNCGKCCPKDKAIKRFIVRNIVEQAAIRDVQEASVYEGYTLPKLYAKTQYCVSCAIHSHVVRVRSRTNRRVRTPPPRFARRKEDTPKPGQPGQAPRPAGPGAAAAAAPRV</sequence>
<reference key="1">
    <citation type="journal article" date="1999" name="Nature">
        <title>Sequence and analysis of chromosome 2 of the plant Arabidopsis thaliana.</title>
        <authorList>
            <person name="Lin X."/>
            <person name="Kaul S."/>
            <person name="Rounsley S.D."/>
            <person name="Shea T.P."/>
            <person name="Benito M.-I."/>
            <person name="Town C.D."/>
            <person name="Fujii C.Y."/>
            <person name="Mason T.M."/>
            <person name="Bowman C.L."/>
            <person name="Barnstead M.E."/>
            <person name="Feldblyum T.V."/>
            <person name="Buell C.R."/>
            <person name="Ketchum K.A."/>
            <person name="Lee J.J."/>
            <person name="Ronning C.M."/>
            <person name="Koo H.L."/>
            <person name="Moffat K.S."/>
            <person name="Cronin L.A."/>
            <person name="Shen M."/>
            <person name="Pai G."/>
            <person name="Van Aken S."/>
            <person name="Umayam L."/>
            <person name="Tallon L.J."/>
            <person name="Gill J.E."/>
            <person name="Adams M.D."/>
            <person name="Carrera A.J."/>
            <person name="Creasy T.H."/>
            <person name="Goodman H.M."/>
            <person name="Somerville C.R."/>
            <person name="Copenhaver G.P."/>
            <person name="Preuss D."/>
            <person name="Nierman W.C."/>
            <person name="White O."/>
            <person name="Eisen J.A."/>
            <person name="Salzberg S.L."/>
            <person name="Fraser C.M."/>
            <person name="Venter J.C."/>
        </authorList>
    </citation>
    <scope>NUCLEOTIDE SEQUENCE [LARGE SCALE GENOMIC DNA]</scope>
    <source>
        <strain>cv. Columbia</strain>
    </source>
</reference>
<reference key="2">
    <citation type="journal article" date="2017" name="Plant J.">
        <title>Araport11: a complete reannotation of the Arabidopsis thaliana reference genome.</title>
        <authorList>
            <person name="Cheng C.Y."/>
            <person name="Krishnakumar V."/>
            <person name="Chan A.P."/>
            <person name="Thibaud-Nissen F."/>
            <person name="Schobel S."/>
            <person name="Town C.D."/>
        </authorList>
    </citation>
    <scope>GENOME REANNOTATION</scope>
    <source>
        <strain>cv. Columbia</strain>
    </source>
</reference>
<reference key="3">
    <citation type="journal article" date="2003" name="Science">
        <title>Empirical analysis of transcriptional activity in the Arabidopsis genome.</title>
        <authorList>
            <person name="Yamada K."/>
            <person name="Lim J."/>
            <person name="Dale J.M."/>
            <person name="Chen H."/>
            <person name="Shinn P."/>
            <person name="Palm C.J."/>
            <person name="Southwick A.M."/>
            <person name="Wu H.C."/>
            <person name="Kim C.J."/>
            <person name="Nguyen M."/>
            <person name="Pham P.K."/>
            <person name="Cheuk R.F."/>
            <person name="Karlin-Newmann G."/>
            <person name="Liu S.X."/>
            <person name="Lam B."/>
            <person name="Sakano H."/>
            <person name="Wu T."/>
            <person name="Yu G."/>
            <person name="Miranda M."/>
            <person name="Quach H.L."/>
            <person name="Tripp M."/>
            <person name="Chang C.H."/>
            <person name="Lee J.M."/>
            <person name="Toriumi M.J."/>
            <person name="Chan M.M."/>
            <person name="Tang C.C."/>
            <person name="Onodera C.S."/>
            <person name="Deng J.M."/>
            <person name="Akiyama K."/>
            <person name="Ansari Y."/>
            <person name="Arakawa T."/>
            <person name="Banh J."/>
            <person name="Banno F."/>
            <person name="Bowser L."/>
            <person name="Brooks S.Y."/>
            <person name="Carninci P."/>
            <person name="Chao Q."/>
            <person name="Choy N."/>
            <person name="Enju A."/>
            <person name="Goldsmith A.D."/>
            <person name="Gurjal M."/>
            <person name="Hansen N.F."/>
            <person name="Hayashizaki Y."/>
            <person name="Johnson-Hopson C."/>
            <person name="Hsuan V.W."/>
            <person name="Iida K."/>
            <person name="Karnes M."/>
            <person name="Khan S."/>
            <person name="Koesema E."/>
            <person name="Ishida J."/>
            <person name="Jiang P.X."/>
            <person name="Jones T."/>
            <person name="Kawai J."/>
            <person name="Kamiya A."/>
            <person name="Meyers C."/>
            <person name="Nakajima M."/>
            <person name="Narusaka M."/>
            <person name="Seki M."/>
            <person name="Sakurai T."/>
            <person name="Satou M."/>
            <person name="Tamse R."/>
            <person name="Vaysberg M."/>
            <person name="Wallender E.K."/>
            <person name="Wong C."/>
            <person name="Yamamura Y."/>
            <person name="Yuan S."/>
            <person name="Shinozaki K."/>
            <person name="Davis R.W."/>
            <person name="Theologis A."/>
            <person name="Ecker J.R."/>
        </authorList>
    </citation>
    <scope>NUCLEOTIDE SEQUENCE [LARGE SCALE MRNA]</scope>
    <source>
        <strain>cv. Columbia</strain>
    </source>
</reference>
<reference key="4">
    <citation type="submission" date="2006-08" db="EMBL/GenBank/DDBJ databases">
        <title>Arabidopsis ORF clones.</title>
        <authorList>
            <person name="Cheuk R.F."/>
            <person name="Chen H."/>
            <person name="Kim C.J."/>
            <person name="Shinn P."/>
            <person name="Ecker J.R."/>
        </authorList>
    </citation>
    <scope>NUCLEOTIDE SEQUENCE [LARGE SCALE MRNA]</scope>
    <source>
        <strain>cv. Columbia</strain>
    </source>
</reference>
<reference key="5">
    <citation type="submission" date="2002-03" db="EMBL/GenBank/DDBJ databases">
        <title>Full-length cDNA from Arabidopsis thaliana.</title>
        <authorList>
            <person name="Brover V.V."/>
            <person name="Troukhan M.E."/>
            <person name="Alexandrov N.A."/>
            <person name="Lu Y.-P."/>
            <person name="Flavell R.B."/>
            <person name="Feldmann K.A."/>
        </authorList>
    </citation>
    <scope>NUCLEOTIDE SEQUENCE [LARGE SCALE MRNA]</scope>
</reference>
<reference key="6">
    <citation type="journal article" date="2001" name="Plant Physiol.">
        <title>The organization of cytoplasmic ribosomal protein genes in the Arabidopsis genome.</title>
        <authorList>
            <person name="Barakat A."/>
            <person name="Szick-Miranda K."/>
            <person name="Chang I.-F."/>
            <person name="Guyot R."/>
            <person name="Blanc G."/>
            <person name="Cooke R."/>
            <person name="Delseny M."/>
            <person name="Bailey-Serres J."/>
        </authorList>
    </citation>
    <scope>GENE FAMILY ORGANIZATION</scope>
    <scope>NOMENCLATURE</scope>
</reference>
<reference key="7">
    <citation type="journal article" date="2023" name="Plant Cell">
        <title>An updated nomenclature for plant ribosomal protein genes.</title>
        <authorList>
            <person name="Scarpin M.R."/>
            <person name="Busche M."/>
            <person name="Martinez R.E."/>
            <person name="Harper L.C."/>
            <person name="Reiser L."/>
            <person name="Szakonyi D."/>
            <person name="Merchante C."/>
            <person name="Lan T."/>
            <person name="Xiong W."/>
            <person name="Mo B."/>
            <person name="Tang G."/>
            <person name="Chen X."/>
            <person name="Bailey-Serres J."/>
            <person name="Browning K.S."/>
            <person name="Brunkard J.O."/>
        </authorList>
    </citation>
    <scope>NOMENCLATURE</scope>
</reference>
<feature type="chain" id="PRO_0000250536" description="Small ribosomal subunit protein eS26z">
    <location>
        <begin position="1"/>
        <end position="133"/>
    </location>
</feature>
<feature type="region of interest" description="Disordered" evidence="1">
    <location>
        <begin position="86"/>
        <end position="133"/>
    </location>
</feature>
<feature type="compositionally biased region" description="Basic residues" evidence="1">
    <location>
        <begin position="86"/>
        <end position="95"/>
    </location>
</feature>
<feature type="compositionally biased region" description="Low complexity" evidence="1">
    <location>
        <begin position="113"/>
        <end position="133"/>
    </location>
</feature>
<feature type="sequence conflict" description="In Ref. 3; AAM20524." evidence="3" ref="3">
    <original>L</original>
    <variation>F</variation>
    <location>
        <position position="64"/>
    </location>
</feature>
<comment type="similarity">
    <text evidence="3">Belongs to the eukaryotic ribosomal protein eS26 family.</text>
</comment>
<gene>
    <name type="primary">RPS26B</name>
    <name type="ordered locus">At2g40510</name>
    <name type="ORF">T2P4.14</name>
</gene>
<dbReference type="EMBL" id="AC002336">
    <property type="protein sequence ID" value="AAB87594.1"/>
    <property type="molecule type" value="Genomic_DNA"/>
</dbReference>
<dbReference type="EMBL" id="CP002685">
    <property type="protein sequence ID" value="AEC09839.1"/>
    <property type="molecule type" value="Genomic_DNA"/>
</dbReference>
<dbReference type="EMBL" id="AY099673">
    <property type="protein sequence ID" value="AAM20524.1"/>
    <property type="molecule type" value="mRNA"/>
</dbReference>
<dbReference type="EMBL" id="BT020291">
    <property type="protein sequence ID" value="AAV84512.1"/>
    <property type="molecule type" value="mRNA"/>
</dbReference>
<dbReference type="EMBL" id="BT026422">
    <property type="protein sequence ID" value="ABH04529.1"/>
    <property type="molecule type" value="mRNA"/>
</dbReference>
<dbReference type="EMBL" id="AY086823">
    <property type="protein sequence ID" value="AAM63871.1"/>
    <property type="molecule type" value="mRNA"/>
</dbReference>
<dbReference type="PIR" id="D84830">
    <property type="entry name" value="D84830"/>
</dbReference>
<dbReference type="RefSeq" id="NP_181583.1">
    <property type="nucleotide sequence ID" value="NM_129613.5"/>
</dbReference>
<dbReference type="SMR" id="Q8LPJ7"/>
<dbReference type="BioGRID" id="3984">
    <property type="interactions" value="148"/>
</dbReference>
<dbReference type="FunCoup" id="Q8LPJ7">
    <property type="interactions" value="2695"/>
</dbReference>
<dbReference type="IntAct" id="Q8LPJ7">
    <property type="interactions" value="2"/>
</dbReference>
<dbReference type="STRING" id="3702.Q8LPJ7"/>
<dbReference type="iPTMnet" id="Q8LPJ7"/>
<dbReference type="PaxDb" id="3702-AT2G40510.1"/>
<dbReference type="ProteomicsDB" id="237016"/>
<dbReference type="EnsemblPlants" id="AT2G40510.1">
    <property type="protein sequence ID" value="AT2G40510.1"/>
    <property type="gene ID" value="AT2G40510"/>
</dbReference>
<dbReference type="GeneID" id="818646"/>
<dbReference type="Gramene" id="AT2G40510.1">
    <property type="protein sequence ID" value="AT2G40510.1"/>
    <property type="gene ID" value="AT2G40510"/>
</dbReference>
<dbReference type="KEGG" id="ath:AT2G40510"/>
<dbReference type="Araport" id="AT2G40510"/>
<dbReference type="TAIR" id="AT2G40510"/>
<dbReference type="eggNOG" id="KOG1768">
    <property type="taxonomic scope" value="Eukaryota"/>
</dbReference>
<dbReference type="HOGENOM" id="CLU_129451_2_0_1"/>
<dbReference type="InParanoid" id="Q8LPJ7"/>
<dbReference type="OMA" id="KCYCVSC"/>
<dbReference type="OrthoDB" id="1111261at2759"/>
<dbReference type="PhylomeDB" id="Q8LPJ7"/>
<dbReference type="PRO" id="PR:Q8LPJ7"/>
<dbReference type="Proteomes" id="UP000006548">
    <property type="component" value="Chromosome 2"/>
</dbReference>
<dbReference type="ExpressionAtlas" id="Q8LPJ7">
    <property type="expression patterns" value="baseline and differential"/>
</dbReference>
<dbReference type="GO" id="GO:0022627">
    <property type="term" value="C:cytosolic small ribosomal subunit"/>
    <property type="evidence" value="ECO:0007005"/>
    <property type="project" value="TAIR"/>
</dbReference>
<dbReference type="GO" id="GO:0005794">
    <property type="term" value="C:Golgi apparatus"/>
    <property type="evidence" value="ECO:0007005"/>
    <property type="project" value="TAIR"/>
</dbReference>
<dbReference type="GO" id="GO:0009506">
    <property type="term" value="C:plasmodesma"/>
    <property type="evidence" value="ECO:0007005"/>
    <property type="project" value="TAIR"/>
</dbReference>
<dbReference type="GO" id="GO:0003729">
    <property type="term" value="F:mRNA binding"/>
    <property type="evidence" value="ECO:0000314"/>
    <property type="project" value="TAIR"/>
</dbReference>
<dbReference type="GO" id="GO:0003735">
    <property type="term" value="F:structural constituent of ribosome"/>
    <property type="evidence" value="ECO:0000314"/>
    <property type="project" value="CAFA"/>
</dbReference>
<dbReference type="GO" id="GO:0006412">
    <property type="term" value="P:translation"/>
    <property type="evidence" value="ECO:0007669"/>
    <property type="project" value="InterPro"/>
</dbReference>
<dbReference type="FunFam" id="3.30.1740.20:FF:000002">
    <property type="entry name" value="40S ribosomal protein S26"/>
    <property type="match status" value="1"/>
</dbReference>
<dbReference type="Gene3D" id="3.30.1740.20">
    <property type="entry name" value="Ribosomal protein S26e"/>
    <property type="match status" value="1"/>
</dbReference>
<dbReference type="InterPro" id="IPR000892">
    <property type="entry name" value="Ribosomal_eS26"/>
</dbReference>
<dbReference type="InterPro" id="IPR047864">
    <property type="entry name" value="Ribosomal_eS26_CS"/>
</dbReference>
<dbReference type="InterPro" id="IPR038551">
    <property type="entry name" value="Ribosomal_eS26_sf"/>
</dbReference>
<dbReference type="PANTHER" id="PTHR12538">
    <property type="entry name" value="40S RIBOSOMAL PROTEIN S26"/>
    <property type="match status" value="1"/>
</dbReference>
<dbReference type="PANTHER" id="PTHR12538:SF0">
    <property type="entry name" value="40S RIBOSOMAL PROTEIN S26"/>
    <property type="match status" value="1"/>
</dbReference>
<dbReference type="Pfam" id="PF01283">
    <property type="entry name" value="Ribosomal_S26e"/>
    <property type="match status" value="1"/>
</dbReference>
<dbReference type="PROSITE" id="PS00733">
    <property type="entry name" value="RIBOSOMAL_S26E"/>
    <property type="match status" value="1"/>
</dbReference>
<proteinExistence type="evidence at transcript level"/>
<accession>Q8LPJ7</accession>
<accession>O22884</accession>
<name>RS262_ARATH</name>
<organism>
    <name type="scientific">Arabidopsis thaliana</name>
    <name type="common">Mouse-ear cress</name>
    <dbReference type="NCBI Taxonomy" id="3702"/>
    <lineage>
        <taxon>Eukaryota</taxon>
        <taxon>Viridiplantae</taxon>
        <taxon>Streptophyta</taxon>
        <taxon>Embryophyta</taxon>
        <taxon>Tracheophyta</taxon>
        <taxon>Spermatophyta</taxon>
        <taxon>Magnoliopsida</taxon>
        <taxon>eudicotyledons</taxon>
        <taxon>Gunneridae</taxon>
        <taxon>Pentapetalae</taxon>
        <taxon>rosids</taxon>
        <taxon>malvids</taxon>
        <taxon>Brassicales</taxon>
        <taxon>Brassicaceae</taxon>
        <taxon>Camelineae</taxon>
        <taxon>Arabidopsis</taxon>
    </lineage>
</organism>
<keyword id="KW-1185">Reference proteome</keyword>
<keyword id="KW-0687">Ribonucleoprotein</keyword>
<keyword id="KW-0689">Ribosomal protein</keyword>